<evidence type="ECO:0000255" key="1"/>
<evidence type="ECO:0000269" key="2">
    <source>
    </source>
</evidence>
<evidence type="ECO:0000269" key="3">
    <source>
    </source>
</evidence>
<evidence type="ECO:0000303" key="4">
    <source>
    </source>
</evidence>
<evidence type="ECO:0000303" key="5">
    <source>
    </source>
</evidence>
<evidence type="ECO:0000305" key="6"/>
<evidence type="ECO:0000305" key="7">
    <source>
    </source>
</evidence>
<evidence type="ECO:0000312" key="8">
    <source>
        <dbReference type="RGD" id="3757"/>
    </source>
</evidence>
<accession>P24008</accession>
<accession>A0JPJ6</accession>
<keyword id="KW-0024">Alternative initiation</keyword>
<keyword id="KW-0221">Differentiation</keyword>
<keyword id="KW-0256">Endoplasmic reticulum</keyword>
<keyword id="KW-0443">Lipid metabolism</keyword>
<keyword id="KW-0472">Membrane</keyword>
<keyword id="KW-0492">Microsome</keyword>
<keyword id="KW-0521">NADP</keyword>
<keyword id="KW-0560">Oxidoreductase</keyword>
<keyword id="KW-1185">Reference proteome</keyword>
<keyword id="KW-0726">Sexual differentiation</keyword>
<keyword id="KW-0812">Transmembrane</keyword>
<keyword id="KW-1133">Transmembrane helix</keyword>
<organism>
    <name type="scientific">Rattus norvegicus</name>
    <name type="common">Rat</name>
    <dbReference type="NCBI Taxonomy" id="10116"/>
    <lineage>
        <taxon>Eukaryota</taxon>
        <taxon>Metazoa</taxon>
        <taxon>Chordata</taxon>
        <taxon>Craniata</taxon>
        <taxon>Vertebrata</taxon>
        <taxon>Euteleostomi</taxon>
        <taxon>Mammalia</taxon>
        <taxon>Eutheria</taxon>
        <taxon>Euarchontoglires</taxon>
        <taxon>Glires</taxon>
        <taxon>Rodentia</taxon>
        <taxon>Myomorpha</taxon>
        <taxon>Muroidea</taxon>
        <taxon>Muridae</taxon>
        <taxon>Murinae</taxon>
        <taxon>Rattus</taxon>
    </lineage>
</organism>
<dbReference type="EC" id="1.3.1.22"/>
<dbReference type="EMBL" id="J05035">
    <property type="protein sequence ID" value="AAA42102.1"/>
    <property type="molecule type" value="mRNA"/>
</dbReference>
<dbReference type="EMBL" id="S81448">
    <property type="protein sequence ID" value="AAB36218.1"/>
    <property type="molecule type" value="mRNA"/>
</dbReference>
<dbReference type="EMBL" id="BC127454">
    <property type="protein sequence ID" value="AAI27455.1"/>
    <property type="molecule type" value="mRNA"/>
</dbReference>
<dbReference type="PIR" id="S65744">
    <property type="entry name" value="S65744"/>
</dbReference>
<dbReference type="RefSeq" id="NP_058766.2">
    <molecule id="P24008-2"/>
    <property type="nucleotide sequence ID" value="NM_017070.3"/>
</dbReference>
<dbReference type="SMR" id="P24008"/>
<dbReference type="FunCoup" id="P24008">
    <property type="interactions" value="238"/>
</dbReference>
<dbReference type="STRING" id="10116.ENSRNOP00000023659"/>
<dbReference type="BindingDB" id="P24008"/>
<dbReference type="ChEMBL" id="CHEMBL3422"/>
<dbReference type="DrugCentral" id="P24008"/>
<dbReference type="SwissLipids" id="SLP:000001641"/>
<dbReference type="PhosphoSitePlus" id="P24008"/>
<dbReference type="PaxDb" id="10116-ENSRNOP00000023659"/>
<dbReference type="Ensembl" id="ENSRNOT00000023659.7">
    <molecule id="P24008-2"/>
    <property type="protein sequence ID" value="ENSRNOP00000023659.6"/>
    <property type="gene ID" value="ENSRNOG00000017601.8"/>
</dbReference>
<dbReference type="GeneID" id="24950"/>
<dbReference type="KEGG" id="rno:24950"/>
<dbReference type="UCSC" id="RGD:3757">
    <molecule id="P24008-1"/>
    <property type="organism name" value="rat"/>
</dbReference>
<dbReference type="AGR" id="RGD:3757"/>
<dbReference type="CTD" id="6715"/>
<dbReference type="RGD" id="3757">
    <property type="gene designation" value="Srd5a1"/>
</dbReference>
<dbReference type="VEuPathDB" id="HostDB:ENSRNOG00000017601"/>
<dbReference type="eggNOG" id="KOG1638">
    <property type="taxonomic scope" value="Eukaryota"/>
</dbReference>
<dbReference type="GeneTree" id="ENSGT00950000182886"/>
<dbReference type="InParanoid" id="P24008"/>
<dbReference type="OMA" id="PHYALEW"/>
<dbReference type="OrthoDB" id="8433at9989"/>
<dbReference type="PhylomeDB" id="P24008"/>
<dbReference type="BRENDA" id="1.3.1.22">
    <property type="organism ID" value="5301"/>
</dbReference>
<dbReference type="Reactome" id="R-RNO-193048">
    <property type="pathway name" value="Androgen biosynthesis"/>
</dbReference>
<dbReference type="SABIO-RK" id="P24008"/>
<dbReference type="PRO" id="PR:P24008"/>
<dbReference type="Proteomes" id="UP000002494">
    <property type="component" value="Chromosome 1"/>
</dbReference>
<dbReference type="Bgee" id="ENSRNOG00000017601">
    <property type="expression patterns" value="Expressed in liver and 20 other cell types or tissues"/>
</dbReference>
<dbReference type="GO" id="GO:0070852">
    <property type="term" value="C:cell body fiber"/>
    <property type="evidence" value="ECO:0000314"/>
    <property type="project" value="RGD"/>
</dbReference>
<dbReference type="GO" id="GO:0005789">
    <property type="term" value="C:endoplasmic reticulum membrane"/>
    <property type="evidence" value="ECO:0007669"/>
    <property type="project" value="UniProtKB-SubCell"/>
</dbReference>
<dbReference type="GO" id="GO:0043025">
    <property type="term" value="C:neuronal cell body"/>
    <property type="evidence" value="ECO:0000314"/>
    <property type="project" value="RGD"/>
</dbReference>
<dbReference type="GO" id="GO:0048471">
    <property type="term" value="C:perinuclear region of cytoplasm"/>
    <property type="evidence" value="ECO:0000314"/>
    <property type="project" value="RGD"/>
</dbReference>
<dbReference type="GO" id="GO:0047751">
    <property type="term" value="F:3-oxo-5-alpha-steroid 4-dehydrogenase (NADP+) activity"/>
    <property type="evidence" value="ECO:0007669"/>
    <property type="project" value="UniProtKB-EC"/>
</dbReference>
<dbReference type="GO" id="GO:0003865">
    <property type="term" value="F:3-oxo-5-alpha-steroid 4-dehydrogenase activity"/>
    <property type="evidence" value="ECO:0000314"/>
    <property type="project" value="RGD"/>
</dbReference>
<dbReference type="GO" id="GO:0033218">
    <property type="term" value="F:amide binding"/>
    <property type="evidence" value="ECO:0000314"/>
    <property type="project" value="RGD"/>
</dbReference>
<dbReference type="GO" id="GO:0070402">
    <property type="term" value="F:NADPH binding"/>
    <property type="evidence" value="ECO:0000314"/>
    <property type="project" value="RGD"/>
</dbReference>
<dbReference type="GO" id="GO:0006702">
    <property type="term" value="P:androgen biosynthetic process"/>
    <property type="evidence" value="ECO:0000314"/>
    <property type="project" value="RGD"/>
</dbReference>
<dbReference type="GO" id="GO:0006710">
    <property type="term" value="P:androgen catabolic process"/>
    <property type="evidence" value="ECO:0000314"/>
    <property type="project" value="RGD"/>
</dbReference>
<dbReference type="GO" id="GO:0008209">
    <property type="term" value="P:androgen metabolic process"/>
    <property type="evidence" value="ECO:0000314"/>
    <property type="project" value="RGD"/>
</dbReference>
<dbReference type="GO" id="GO:0060348">
    <property type="term" value="P:bone development"/>
    <property type="evidence" value="ECO:0000270"/>
    <property type="project" value="RGD"/>
</dbReference>
<dbReference type="GO" id="GO:0030154">
    <property type="term" value="P:cell differentiation"/>
    <property type="evidence" value="ECO:0007669"/>
    <property type="project" value="UniProtKB-KW"/>
</dbReference>
<dbReference type="GO" id="GO:0071320">
    <property type="term" value="P:cellular response to cAMP"/>
    <property type="evidence" value="ECO:0000270"/>
    <property type="project" value="RGD"/>
</dbReference>
<dbReference type="GO" id="GO:0071549">
    <property type="term" value="P:cellular response to dexamethasone stimulus"/>
    <property type="evidence" value="ECO:0000270"/>
    <property type="project" value="RGD"/>
</dbReference>
<dbReference type="GO" id="GO:0071872">
    <property type="term" value="P:cellular response to epinephrine stimulus"/>
    <property type="evidence" value="ECO:0000270"/>
    <property type="project" value="RGD"/>
</dbReference>
<dbReference type="GO" id="GO:0071392">
    <property type="term" value="P:cellular response to estradiol stimulus"/>
    <property type="evidence" value="ECO:0000270"/>
    <property type="project" value="RGD"/>
</dbReference>
<dbReference type="GO" id="GO:0071363">
    <property type="term" value="P:cellular response to growth factor stimulus"/>
    <property type="evidence" value="ECO:0000270"/>
    <property type="project" value="RGD"/>
</dbReference>
<dbReference type="GO" id="GO:0032869">
    <property type="term" value="P:cellular response to insulin stimulus"/>
    <property type="evidence" value="ECO:0000270"/>
    <property type="project" value="RGD"/>
</dbReference>
<dbReference type="GO" id="GO:1904015">
    <property type="term" value="P:cellular response to serotonin"/>
    <property type="evidence" value="ECO:0000270"/>
    <property type="project" value="RGD"/>
</dbReference>
<dbReference type="GO" id="GO:0009267">
    <property type="term" value="P:cellular response to starvation"/>
    <property type="evidence" value="ECO:0000270"/>
    <property type="project" value="RGD"/>
</dbReference>
<dbReference type="GO" id="GO:0071394">
    <property type="term" value="P:cellular response to testosterone stimulus"/>
    <property type="evidence" value="ECO:0000270"/>
    <property type="project" value="RGD"/>
</dbReference>
<dbReference type="GO" id="GO:0021987">
    <property type="term" value="P:cerebral cortex development"/>
    <property type="evidence" value="ECO:0000270"/>
    <property type="project" value="RGD"/>
</dbReference>
<dbReference type="GO" id="GO:0016101">
    <property type="term" value="P:diterpenoid metabolic process"/>
    <property type="evidence" value="ECO:0000270"/>
    <property type="project" value="RGD"/>
</dbReference>
<dbReference type="GO" id="GO:0030540">
    <property type="term" value="P:female genitalia development"/>
    <property type="evidence" value="ECO:0000270"/>
    <property type="project" value="RGD"/>
</dbReference>
<dbReference type="GO" id="GO:0021766">
    <property type="term" value="P:hippocampus development"/>
    <property type="evidence" value="ECO:0000270"/>
    <property type="project" value="RGD"/>
</dbReference>
<dbReference type="GO" id="GO:0021854">
    <property type="term" value="P:hypothalamus development"/>
    <property type="evidence" value="ECO:0000270"/>
    <property type="project" value="RGD"/>
</dbReference>
<dbReference type="GO" id="GO:0001889">
    <property type="term" value="P:liver development"/>
    <property type="evidence" value="ECO:0000270"/>
    <property type="project" value="RGD"/>
</dbReference>
<dbReference type="GO" id="GO:0030539">
    <property type="term" value="P:male genitalia development"/>
    <property type="evidence" value="ECO:0000270"/>
    <property type="project" value="RGD"/>
</dbReference>
<dbReference type="GO" id="GO:0008584">
    <property type="term" value="P:male gonad development"/>
    <property type="evidence" value="ECO:0000270"/>
    <property type="project" value="RGD"/>
</dbReference>
<dbReference type="GO" id="GO:0046661">
    <property type="term" value="P:male sex differentiation"/>
    <property type="evidence" value="ECO:0000304"/>
    <property type="project" value="RGD"/>
</dbReference>
<dbReference type="GO" id="GO:0021983">
    <property type="term" value="P:pituitary gland development"/>
    <property type="evidence" value="ECO:0000270"/>
    <property type="project" value="RGD"/>
</dbReference>
<dbReference type="GO" id="GO:0042448">
    <property type="term" value="P:progesterone metabolic process"/>
    <property type="evidence" value="ECO:0000314"/>
    <property type="project" value="RGD"/>
</dbReference>
<dbReference type="GO" id="GO:0032355">
    <property type="term" value="P:response to estradiol"/>
    <property type="evidence" value="ECO:0000270"/>
    <property type="project" value="RGD"/>
</dbReference>
<dbReference type="GO" id="GO:0043627">
    <property type="term" value="P:response to estrogen"/>
    <property type="evidence" value="ECO:0000270"/>
    <property type="project" value="RGD"/>
</dbReference>
<dbReference type="GO" id="GO:0032354">
    <property type="term" value="P:response to follicle-stimulating hormone"/>
    <property type="evidence" value="ECO:0000270"/>
    <property type="project" value="RGD"/>
</dbReference>
<dbReference type="GO" id="GO:0060992">
    <property type="term" value="P:response to fungicide"/>
    <property type="evidence" value="ECO:0000270"/>
    <property type="project" value="RGD"/>
</dbReference>
<dbReference type="GO" id="GO:0060416">
    <property type="term" value="P:response to growth hormone"/>
    <property type="evidence" value="ECO:0000270"/>
    <property type="project" value="RGD"/>
</dbReference>
<dbReference type="GO" id="GO:0014850">
    <property type="term" value="P:response to muscle activity"/>
    <property type="evidence" value="ECO:0000270"/>
    <property type="project" value="RGD"/>
</dbReference>
<dbReference type="GO" id="GO:0033574">
    <property type="term" value="P:response to testosterone"/>
    <property type="evidence" value="ECO:0000270"/>
    <property type="project" value="RGD"/>
</dbReference>
<dbReference type="GO" id="GO:0009410">
    <property type="term" value="P:response to xenobiotic stimulus"/>
    <property type="evidence" value="ECO:0000315"/>
    <property type="project" value="RGD"/>
</dbReference>
<dbReference type="GO" id="GO:0042428">
    <property type="term" value="P:serotonin metabolic process"/>
    <property type="evidence" value="ECO:0000270"/>
    <property type="project" value="RGD"/>
</dbReference>
<dbReference type="GO" id="GO:0021510">
    <property type="term" value="P:spinal cord development"/>
    <property type="evidence" value="ECO:0000270"/>
    <property type="project" value="RGD"/>
</dbReference>
<dbReference type="GO" id="GO:0006694">
    <property type="term" value="P:steroid biosynthetic process"/>
    <property type="evidence" value="ECO:0000314"/>
    <property type="project" value="RGD"/>
</dbReference>
<dbReference type="GO" id="GO:0021794">
    <property type="term" value="P:thalamus development"/>
    <property type="evidence" value="ECO:0000270"/>
    <property type="project" value="RGD"/>
</dbReference>
<dbReference type="GO" id="GO:0001655">
    <property type="term" value="P:urogenital system development"/>
    <property type="evidence" value="ECO:0000270"/>
    <property type="project" value="RGD"/>
</dbReference>
<dbReference type="FunFam" id="1.20.120.1630:FF:000002">
    <property type="entry name" value="Steroid 5 alpha-reductase 1"/>
    <property type="match status" value="1"/>
</dbReference>
<dbReference type="Gene3D" id="1.20.120.1630">
    <property type="match status" value="1"/>
</dbReference>
<dbReference type="InterPro" id="IPR016636">
    <property type="entry name" value="3-oxo-5-alpha-steroid_4-DH"/>
</dbReference>
<dbReference type="InterPro" id="IPR001104">
    <property type="entry name" value="3-oxo-5_a-steroid_4-DH_C"/>
</dbReference>
<dbReference type="InterPro" id="IPR039357">
    <property type="entry name" value="SRD5A/TECR"/>
</dbReference>
<dbReference type="PANTHER" id="PTHR10556">
    <property type="entry name" value="3-OXO-5-ALPHA-STEROID 4-DEHYDROGENASE"/>
    <property type="match status" value="1"/>
</dbReference>
<dbReference type="PANTHER" id="PTHR10556:SF57">
    <property type="entry name" value="3-OXO-5-ALPHA-STEROID 4-DEHYDROGENASE 1"/>
    <property type="match status" value="1"/>
</dbReference>
<dbReference type="Pfam" id="PF02544">
    <property type="entry name" value="Steroid_dh"/>
    <property type="match status" value="1"/>
</dbReference>
<dbReference type="PIRSF" id="PIRSF015596">
    <property type="entry name" value="5_alpha-SR2"/>
    <property type="match status" value="1"/>
</dbReference>
<dbReference type="PROSITE" id="PS50244">
    <property type="entry name" value="S5A_REDUCTASE"/>
    <property type="match status" value="1"/>
</dbReference>
<comment type="function">
    <text evidence="2">Converts testosterone into 5-alpha-dihydrotestosterone and progesterone or corticosterone into their corresponding 5-alpha-3-oxosteroids. It plays a central role in sexual differentiation and androgen physiology.</text>
</comment>
<comment type="catalytic activity">
    <reaction evidence="7">
        <text>a 3-oxo-5alpha-steroid + NADP(+) = a 3-oxo-Delta(4)-steroid + NADPH + H(+)</text>
        <dbReference type="Rhea" id="RHEA:54384"/>
        <dbReference type="ChEBI" id="CHEBI:13601"/>
        <dbReference type="ChEBI" id="CHEBI:15378"/>
        <dbReference type="ChEBI" id="CHEBI:47909"/>
        <dbReference type="ChEBI" id="CHEBI:57783"/>
        <dbReference type="ChEBI" id="CHEBI:58349"/>
        <dbReference type="EC" id="1.3.1.22"/>
    </reaction>
    <physiologicalReaction direction="right-to-left" evidence="7">
        <dbReference type="Rhea" id="RHEA:54386"/>
    </physiologicalReaction>
</comment>
<comment type="catalytic activity">
    <reaction evidence="3">
        <text>5alpha-pregnane-3,20-dione + NADP(+) = progesterone + NADPH + H(+)</text>
        <dbReference type="Rhea" id="RHEA:21952"/>
        <dbReference type="ChEBI" id="CHEBI:15378"/>
        <dbReference type="ChEBI" id="CHEBI:17026"/>
        <dbReference type="ChEBI" id="CHEBI:28952"/>
        <dbReference type="ChEBI" id="CHEBI:57783"/>
        <dbReference type="ChEBI" id="CHEBI:58349"/>
        <dbReference type="EC" id="1.3.1.22"/>
    </reaction>
    <physiologicalReaction direction="right-to-left" evidence="7">
        <dbReference type="Rhea" id="RHEA:21954"/>
    </physiologicalReaction>
</comment>
<comment type="catalytic activity">
    <reaction evidence="3">
        <text>17beta-hydroxy-5alpha-androstan-3-one + NADP(+) = testosterone + NADPH + H(+)</text>
        <dbReference type="Rhea" id="RHEA:50820"/>
        <dbReference type="ChEBI" id="CHEBI:15378"/>
        <dbReference type="ChEBI" id="CHEBI:16330"/>
        <dbReference type="ChEBI" id="CHEBI:17347"/>
        <dbReference type="ChEBI" id="CHEBI:57783"/>
        <dbReference type="ChEBI" id="CHEBI:58349"/>
        <dbReference type="EC" id="1.3.1.22"/>
    </reaction>
    <physiologicalReaction direction="right-to-left" evidence="7">
        <dbReference type="Rhea" id="RHEA:50822"/>
    </physiologicalReaction>
</comment>
<comment type="catalytic activity">
    <reaction evidence="3">
        <text>androst-4-ene-3,17-dione + NADPH + H(+) = 5alpha-androstan-3,17-dione + NADP(+)</text>
        <dbReference type="Rhea" id="RHEA:50816"/>
        <dbReference type="ChEBI" id="CHEBI:15378"/>
        <dbReference type="ChEBI" id="CHEBI:15994"/>
        <dbReference type="ChEBI" id="CHEBI:16422"/>
        <dbReference type="ChEBI" id="CHEBI:57783"/>
        <dbReference type="ChEBI" id="CHEBI:58349"/>
    </reaction>
    <physiologicalReaction direction="left-to-right" evidence="7">
        <dbReference type="Rhea" id="RHEA:50817"/>
    </physiologicalReaction>
</comment>
<comment type="biophysicochemical properties">
    <kinetics>
        <KM evidence="2">2.5 uM for testosterone</KM>
        <KM evidence="2">2.8 uM for androstenedione</KM>
        <KM evidence="2">0.5 uM for progesterone</KM>
        <Vmax evidence="2">2.5 nmol/min/mg enzyme toward testosterone</Vmax>
        <Vmax evidence="2">2.2 nmol/min/mg enzyme toward androstenedione</Vmax>
        <Vmax evidence="2">1.8 nmol/min/mg enzyme toward progesterone</Vmax>
    </kinetics>
    <phDependence>
        <text>Optimally active at alkaline pHs.</text>
    </phDependence>
</comment>
<comment type="subcellular location">
    <subcellularLocation>
        <location>Microsome membrane</location>
        <topology>Multi-pass membrane protein</topology>
    </subcellularLocation>
    <subcellularLocation>
        <location evidence="6">Endoplasmic reticulum membrane</location>
        <topology evidence="6">Multi-pass membrane protein</topology>
    </subcellularLocation>
</comment>
<comment type="alternative products">
    <event type="alternative initiation"/>
    <isoform>
        <id>P24008-1</id>
        <name>Long</name>
        <sequence type="displayed"/>
    </isoform>
    <isoform>
        <id>P24008-2</id>
        <name>Short</name>
        <sequence type="described" ref="VSP_018884"/>
    </isoform>
</comment>
<comment type="tissue specificity">
    <text>Liver and prostate (at a low level).</text>
</comment>
<comment type="developmental stage">
    <text>After the establishment of chromosomal sex at fertilization.</text>
</comment>
<comment type="induction">
    <text>Its expression is regulated by androgens such as testosterone.</text>
</comment>
<comment type="similarity">
    <text evidence="6">Belongs to the steroid 5-alpha reductase family.</text>
</comment>
<gene>
    <name evidence="8" type="primary">Srd5a1</name>
</gene>
<feature type="chain" id="PRO_0000031565" description="3-oxo-5-alpha-steroid 4-dehydrogenase 1">
    <location>
        <begin position="1"/>
        <end position="259"/>
    </location>
</feature>
<feature type="transmembrane region" description="Helical" evidence="1">
    <location>
        <begin position="10"/>
        <end position="30"/>
    </location>
</feature>
<feature type="transmembrane region" description="Helical" evidence="1">
    <location>
        <begin position="86"/>
        <end position="106"/>
    </location>
</feature>
<feature type="transmembrane region" description="Helical" evidence="1">
    <location>
        <begin position="111"/>
        <end position="131"/>
    </location>
</feature>
<feature type="transmembrane region" description="Helical" evidence="1">
    <location>
        <begin position="146"/>
        <end position="166"/>
    </location>
</feature>
<feature type="transmembrane region" description="Helical" evidence="1">
    <location>
        <begin position="206"/>
        <end position="226"/>
    </location>
</feature>
<feature type="splice variant" id="VSP_018884" description="In isoform Short." evidence="4 5">
    <location>
        <begin position="1"/>
        <end position="4"/>
    </location>
</feature>
<reference key="1">
    <citation type="journal article" date="1989" name="J. Biol. Chem.">
        <title>Expression cloning and regulation of steroid 5 alpha-reductase, an enzyme essential for male sexual differentiation.</title>
        <authorList>
            <person name="Andersson S."/>
            <person name="Bishop R.W."/>
            <person name="Russell D.W."/>
        </authorList>
    </citation>
    <scope>NUCLEOTIDE SEQUENCE [MRNA] (ISOFORM SHORT)</scope>
</reference>
<reference key="2">
    <citation type="journal article" date="1996" name="Biochim. Biophys. Acta">
        <title>Heterogeneity of rat type I 5 alpha-reductase cDNA: cloning, expression and regulation by pituitary implants and dihydrotestosterone.</title>
        <authorList>
            <person name="Lopez-Solache I."/>
            <person name="Luu-The V."/>
            <person name="Seralini G.E."/>
            <person name="Labrie F."/>
        </authorList>
    </citation>
    <scope>NUCLEOTIDE SEQUENCE [MRNA] (ISOFORM LONG)</scope>
    <source>
        <tissue>Liver</tissue>
    </source>
</reference>
<reference key="3">
    <citation type="journal article" date="2004" name="Genome Res.">
        <title>The status, quality, and expansion of the NIH full-length cDNA project: the Mammalian Gene Collection (MGC).</title>
        <authorList>
            <consortium name="The MGC Project Team"/>
        </authorList>
    </citation>
    <scope>NUCLEOTIDE SEQUENCE [LARGE SCALE MRNA] (ISOFORM SHORT)</scope>
    <source>
        <tissue>Brain</tissue>
    </source>
</reference>
<reference key="4">
    <citation type="journal article" date="1990" name="Proc. Natl. Acad. Sci. U.S.A.">
        <title>Structural and biochemical properties of cloned and expressed human and rat steroid 5 alpha-reductases.</title>
        <authorList>
            <person name="Andersson S."/>
            <person name="Russell D.W."/>
        </authorList>
    </citation>
    <scope>CATALYTIC ACTIVITY</scope>
    <scope>FUNCTION</scope>
    <scope>BIOPHYSICOCHEMICAL PROPERTIES</scope>
</reference>
<sequence length="259" mass="29780">MVPLMELDELCLLDMLVYLEGFMAFVSIVGLRSVGSPYGRYSPQWPGIRVPARPAWFIQELPSMAWPLYEYIRPAAARLGNLPNRVLLAMFLIHYVQRTLVFPVLIRGGKPTLLVTFVLAFLFCTFNGYVQSRYLSQFAVYAEDWVTHPCFLTGFALWLVGMVINIHSDHILRNLRKPGETGYKIPRGGLFEYVSAANYFGELVEWCGFALASWSLQGVVFALFTLSTLLTRAKQHHQWYHEKFEDYPKSRKILIPFVL</sequence>
<name>S5A1_RAT</name>
<protein>
    <recommendedName>
        <fullName evidence="6">3-oxo-5-alpha-steroid 4-dehydrogenase 1</fullName>
        <ecNumber>1.3.1.22</ecNumber>
    </recommendedName>
    <alternativeName>
        <fullName>SR type 1</fullName>
    </alternativeName>
    <alternativeName>
        <fullName>Steroid 5-alpha-reductase 1</fullName>
        <shortName>S5AR 1</shortName>
    </alternativeName>
</protein>
<proteinExistence type="evidence at protein level"/>